<proteinExistence type="inferred from homology"/>
<sequence>MKLSRRSFMKANAVAAVAAAAGLSVPGVARAVVGQQEAIKWDKAPCRFCGTGCGVLVGTQQGRVVACQGDPDAPVNRGLNCIKGYFLPKIMYGKDRLTQPLLRMKNGKYDKEGEFTLITWDQAFDVMEEKFKTALKEKGPESIGMFGSGQWTIWEGYAASKLFKAGFRSNNIDPNARHCMASAVVGFMRTFGMDEPMGCYDDIEQADAFVLWGANMAEMHPILWSRITNRRLSNQNVTVAVLSTYQHRSFELADNGIIFTPQSDLVILNYIANYIIQNNAINQDFFSKHVNLRKGATDIGYGLRPTHPLEKAAKNPGSDASEPMSFEDYKAFVAEYTLEKTAEMTGVPKDQLEQLAQLYADPNKKVISYWTMGFNQHTRGVWANNLVYNLHLLTGKISQPGCGPFSLTGQPSACGTAREVGTFAHRLPADMVVTNEKHRDICEKKWNIPSGTIPAKIGLHAVAQDRALKDGKLNVYWTMCTNNMQAGPNINEERMPGWRDPRNFIIVSDPYPTVSALAADLILPTAMWVEKEGAYGNAERRTQFWRQQVQAPGEAKSDLWQLVQFSRRFKTEEVWPEDLLAKKPELRGKTLYEVLYATPEVSKFPVSELAEDQLNDESRELGFYLQKGLFEEYAWFGRGHGHDLAPFDDYHKARGLRWPVVNGKETQWRYSEGNDPYVKAGEGYKFYGKPDGKAVIFALPFEPAAEAPDEEYDLWLSTGRVLEHWHTGSMTRRVPELHRAFPEAVLFIHPLDAKARDLRRGDKVKVVSRRGEVISIVETRGRNRPPQGLVYMPFFDAAQLVNKLTQDATDPLSKETDFKKCAVKLEKV</sequence>
<name>NAPA_SHIBS</name>
<accession>Q31Z29</accession>
<dbReference type="EC" id="1.9.6.1" evidence="1"/>
<dbReference type="EMBL" id="CP000036">
    <property type="protein sequence ID" value="ABB66679.1"/>
    <property type="molecule type" value="Genomic_DNA"/>
</dbReference>
<dbReference type="RefSeq" id="WP_000778107.1">
    <property type="nucleotide sequence ID" value="NC_007613.1"/>
</dbReference>
<dbReference type="SMR" id="Q31Z29"/>
<dbReference type="KEGG" id="sbo:SBO_2101"/>
<dbReference type="HOGENOM" id="CLU_000422_13_4_6"/>
<dbReference type="Proteomes" id="UP000007067">
    <property type="component" value="Chromosome"/>
</dbReference>
<dbReference type="GO" id="GO:0016020">
    <property type="term" value="C:membrane"/>
    <property type="evidence" value="ECO:0007669"/>
    <property type="project" value="TreeGrafter"/>
</dbReference>
<dbReference type="GO" id="GO:0009325">
    <property type="term" value="C:nitrate reductase complex"/>
    <property type="evidence" value="ECO:0007669"/>
    <property type="project" value="TreeGrafter"/>
</dbReference>
<dbReference type="GO" id="GO:0042597">
    <property type="term" value="C:periplasmic space"/>
    <property type="evidence" value="ECO:0007669"/>
    <property type="project" value="UniProtKB-SubCell"/>
</dbReference>
<dbReference type="GO" id="GO:0051539">
    <property type="term" value="F:4 iron, 4 sulfur cluster binding"/>
    <property type="evidence" value="ECO:0007669"/>
    <property type="project" value="UniProtKB-KW"/>
</dbReference>
<dbReference type="GO" id="GO:0009055">
    <property type="term" value="F:electron transfer activity"/>
    <property type="evidence" value="ECO:0007669"/>
    <property type="project" value="UniProtKB-UniRule"/>
</dbReference>
<dbReference type="GO" id="GO:0005506">
    <property type="term" value="F:iron ion binding"/>
    <property type="evidence" value="ECO:0007669"/>
    <property type="project" value="UniProtKB-UniRule"/>
</dbReference>
<dbReference type="GO" id="GO:0030151">
    <property type="term" value="F:molybdenum ion binding"/>
    <property type="evidence" value="ECO:0007669"/>
    <property type="project" value="InterPro"/>
</dbReference>
<dbReference type="GO" id="GO:0043546">
    <property type="term" value="F:molybdopterin cofactor binding"/>
    <property type="evidence" value="ECO:0007669"/>
    <property type="project" value="InterPro"/>
</dbReference>
<dbReference type="GO" id="GO:0050140">
    <property type="term" value="F:nitrate reductase (cytochrome) activity"/>
    <property type="evidence" value="ECO:0007669"/>
    <property type="project" value="UniProtKB-EC"/>
</dbReference>
<dbReference type="GO" id="GO:0045333">
    <property type="term" value="P:cellular respiration"/>
    <property type="evidence" value="ECO:0007669"/>
    <property type="project" value="UniProtKB-ARBA"/>
</dbReference>
<dbReference type="GO" id="GO:0006777">
    <property type="term" value="P:Mo-molybdopterin cofactor biosynthetic process"/>
    <property type="evidence" value="ECO:0007669"/>
    <property type="project" value="UniProtKB-UniRule"/>
</dbReference>
<dbReference type="GO" id="GO:0042128">
    <property type="term" value="P:nitrate assimilation"/>
    <property type="evidence" value="ECO:0007669"/>
    <property type="project" value="UniProtKB-UniRule"/>
</dbReference>
<dbReference type="CDD" id="cd02791">
    <property type="entry name" value="MopB_CT_Nitrate-R-NapA-like"/>
    <property type="match status" value="1"/>
</dbReference>
<dbReference type="CDD" id="cd02754">
    <property type="entry name" value="MopB_Nitrate-R-NapA-like"/>
    <property type="match status" value="1"/>
</dbReference>
<dbReference type="FunFam" id="2.40.40.20:FF:000005">
    <property type="entry name" value="Periplasmic nitrate reductase"/>
    <property type="match status" value="1"/>
</dbReference>
<dbReference type="FunFam" id="3.40.228.10:FF:000001">
    <property type="entry name" value="Periplasmic nitrate reductase"/>
    <property type="match status" value="1"/>
</dbReference>
<dbReference type="Gene3D" id="2.40.40.20">
    <property type="match status" value="1"/>
</dbReference>
<dbReference type="Gene3D" id="3.30.200.210">
    <property type="match status" value="1"/>
</dbReference>
<dbReference type="Gene3D" id="3.40.50.740">
    <property type="match status" value="1"/>
</dbReference>
<dbReference type="Gene3D" id="3.40.228.10">
    <property type="entry name" value="Dimethylsulfoxide Reductase, domain 2"/>
    <property type="match status" value="1"/>
</dbReference>
<dbReference type="HAMAP" id="MF_01630">
    <property type="entry name" value="Nitrate_reduct_NapA"/>
    <property type="match status" value="1"/>
</dbReference>
<dbReference type="InterPro" id="IPR009010">
    <property type="entry name" value="Asp_de-COase-like_dom_sf"/>
</dbReference>
<dbReference type="InterPro" id="IPR041957">
    <property type="entry name" value="CT_Nitrate-R-NapA-like"/>
</dbReference>
<dbReference type="InterPro" id="IPR006657">
    <property type="entry name" value="MoPterin_dinucl-bd_dom"/>
</dbReference>
<dbReference type="InterPro" id="IPR006656">
    <property type="entry name" value="Mopterin_OxRdtase"/>
</dbReference>
<dbReference type="InterPro" id="IPR006963">
    <property type="entry name" value="Mopterin_OxRdtase_4Fe-4S_dom"/>
</dbReference>
<dbReference type="InterPro" id="IPR027467">
    <property type="entry name" value="MopterinOxRdtase_cofactor_BS"/>
</dbReference>
<dbReference type="InterPro" id="IPR010051">
    <property type="entry name" value="Periplasm_NO3_reductase_lsu"/>
</dbReference>
<dbReference type="InterPro" id="IPR050123">
    <property type="entry name" value="Prok_molybdopt-oxidoreductase"/>
</dbReference>
<dbReference type="InterPro" id="IPR006311">
    <property type="entry name" value="TAT_signal"/>
</dbReference>
<dbReference type="InterPro" id="IPR019546">
    <property type="entry name" value="TAT_signal_bac_arc"/>
</dbReference>
<dbReference type="NCBIfam" id="TIGR01706">
    <property type="entry name" value="NAPA"/>
    <property type="match status" value="1"/>
</dbReference>
<dbReference type="NCBIfam" id="NF010055">
    <property type="entry name" value="PRK13532.1"/>
    <property type="match status" value="1"/>
</dbReference>
<dbReference type="NCBIfam" id="TIGR01409">
    <property type="entry name" value="TAT_signal_seq"/>
    <property type="match status" value="1"/>
</dbReference>
<dbReference type="PANTHER" id="PTHR43105:SF11">
    <property type="entry name" value="PERIPLASMIC NITRATE REDUCTASE"/>
    <property type="match status" value="1"/>
</dbReference>
<dbReference type="PANTHER" id="PTHR43105">
    <property type="entry name" value="RESPIRATORY NITRATE REDUCTASE"/>
    <property type="match status" value="1"/>
</dbReference>
<dbReference type="Pfam" id="PF04879">
    <property type="entry name" value="Molybdop_Fe4S4"/>
    <property type="match status" value="1"/>
</dbReference>
<dbReference type="Pfam" id="PF00384">
    <property type="entry name" value="Molybdopterin"/>
    <property type="match status" value="1"/>
</dbReference>
<dbReference type="Pfam" id="PF01568">
    <property type="entry name" value="Molydop_binding"/>
    <property type="match status" value="1"/>
</dbReference>
<dbReference type="SMART" id="SM00926">
    <property type="entry name" value="Molybdop_Fe4S4"/>
    <property type="match status" value="1"/>
</dbReference>
<dbReference type="SUPFAM" id="SSF50692">
    <property type="entry name" value="ADC-like"/>
    <property type="match status" value="1"/>
</dbReference>
<dbReference type="SUPFAM" id="SSF53706">
    <property type="entry name" value="Formate dehydrogenase/DMSO reductase, domains 1-3"/>
    <property type="match status" value="1"/>
</dbReference>
<dbReference type="PROSITE" id="PS51669">
    <property type="entry name" value="4FE4S_MOW_BIS_MGD"/>
    <property type="match status" value="1"/>
</dbReference>
<dbReference type="PROSITE" id="PS00551">
    <property type="entry name" value="MOLYBDOPTERIN_PROK_1"/>
    <property type="match status" value="1"/>
</dbReference>
<dbReference type="PROSITE" id="PS51318">
    <property type="entry name" value="TAT"/>
    <property type="match status" value="1"/>
</dbReference>
<feature type="signal peptide" description="Tat-type signal" evidence="1">
    <location>
        <begin position="1"/>
        <end position="31"/>
    </location>
</feature>
<feature type="chain" id="PRO_0000046004" description="Periplasmic nitrate reductase" evidence="1">
    <location>
        <begin position="32"/>
        <end position="828"/>
    </location>
</feature>
<feature type="domain" description="4Fe-4S Mo/W bis-MGD-type" evidence="1">
    <location>
        <begin position="39"/>
        <end position="95"/>
    </location>
</feature>
<feature type="binding site" evidence="1">
    <location>
        <position position="46"/>
    </location>
    <ligand>
        <name>[4Fe-4S] cluster</name>
        <dbReference type="ChEBI" id="CHEBI:49883"/>
    </ligand>
</feature>
<feature type="binding site" evidence="1">
    <location>
        <position position="49"/>
    </location>
    <ligand>
        <name>[4Fe-4S] cluster</name>
        <dbReference type="ChEBI" id="CHEBI:49883"/>
    </ligand>
</feature>
<feature type="binding site" evidence="1">
    <location>
        <position position="53"/>
    </location>
    <ligand>
        <name>[4Fe-4S] cluster</name>
        <dbReference type="ChEBI" id="CHEBI:49883"/>
    </ligand>
</feature>
<feature type="binding site" evidence="1">
    <location>
        <position position="81"/>
    </location>
    <ligand>
        <name>[4Fe-4S] cluster</name>
        <dbReference type="ChEBI" id="CHEBI:49883"/>
    </ligand>
</feature>
<feature type="binding site" evidence="1">
    <location>
        <position position="83"/>
    </location>
    <ligand>
        <name>Mo-bis(molybdopterin guanine dinucleotide)</name>
        <dbReference type="ChEBI" id="CHEBI:60539"/>
    </ligand>
</feature>
<feature type="binding site" evidence="1">
    <location>
        <position position="150"/>
    </location>
    <ligand>
        <name>Mo-bis(molybdopterin guanine dinucleotide)</name>
        <dbReference type="ChEBI" id="CHEBI:60539"/>
    </ligand>
</feature>
<feature type="binding site" evidence="1">
    <location>
        <position position="175"/>
    </location>
    <ligand>
        <name>Mo-bis(molybdopterin guanine dinucleotide)</name>
        <dbReference type="ChEBI" id="CHEBI:60539"/>
    </ligand>
</feature>
<feature type="binding site" evidence="1">
    <location>
        <position position="179"/>
    </location>
    <ligand>
        <name>Mo-bis(molybdopterin guanine dinucleotide)</name>
        <dbReference type="ChEBI" id="CHEBI:60539"/>
    </ligand>
</feature>
<feature type="binding site" evidence="1">
    <location>
        <begin position="212"/>
        <end position="219"/>
    </location>
    <ligand>
        <name>Mo-bis(molybdopterin guanine dinucleotide)</name>
        <dbReference type="ChEBI" id="CHEBI:60539"/>
    </ligand>
</feature>
<feature type="binding site" evidence="1">
    <location>
        <begin position="243"/>
        <end position="247"/>
    </location>
    <ligand>
        <name>Mo-bis(molybdopterin guanine dinucleotide)</name>
        <dbReference type="ChEBI" id="CHEBI:60539"/>
    </ligand>
</feature>
<feature type="binding site" evidence="1">
    <location>
        <begin position="262"/>
        <end position="264"/>
    </location>
    <ligand>
        <name>Mo-bis(molybdopterin guanine dinucleotide)</name>
        <dbReference type="ChEBI" id="CHEBI:60539"/>
    </ligand>
</feature>
<feature type="binding site" evidence="1">
    <location>
        <position position="372"/>
    </location>
    <ligand>
        <name>Mo-bis(molybdopterin guanine dinucleotide)</name>
        <dbReference type="ChEBI" id="CHEBI:60539"/>
    </ligand>
</feature>
<feature type="binding site" evidence="1">
    <location>
        <position position="376"/>
    </location>
    <ligand>
        <name>Mo-bis(molybdopterin guanine dinucleotide)</name>
        <dbReference type="ChEBI" id="CHEBI:60539"/>
    </ligand>
</feature>
<feature type="binding site" evidence="1">
    <location>
        <position position="482"/>
    </location>
    <ligand>
        <name>Mo-bis(molybdopterin guanine dinucleotide)</name>
        <dbReference type="ChEBI" id="CHEBI:60539"/>
    </ligand>
</feature>
<feature type="binding site" evidence="1">
    <location>
        <begin position="508"/>
        <end position="509"/>
    </location>
    <ligand>
        <name>Mo-bis(molybdopterin guanine dinucleotide)</name>
        <dbReference type="ChEBI" id="CHEBI:60539"/>
    </ligand>
</feature>
<feature type="binding site" evidence="1">
    <location>
        <position position="531"/>
    </location>
    <ligand>
        <name>Mo-bis(molybdopterin guanine dinucleotide)</name>
        <dbReference type="ChEBI" id="CHEBI:60539"/>
    </ligand>
</feature>
<feature type="binding site" evidence="1">
    <location>
        <position position="558"/>
    </location>
    <ligand>
        <name>Mo-bis(molybdopterin guanine dinucleotide)</name>
        <dbReference type="ChEBI" id="CHEBI:60539"/>
    </ligand>
</feature>
<feature type="binding site" evidence="1">
    <location>
        <begin position="718"/>
        <end position="727"/>
    </location>
    <ligand>
        <name>Mo-bis(molybdopterin guanine dinucleotide)</name>
        <dbReference type="ChEBI" id="CHEBI:60539"/>
    </ligand>
</feature>
<feature type="binding site" evidence="1">
    <location>
        <position position="794"/>
    </location>
    <ligand>
        <name>substrate</name>
    </ligand>
</feature>
<feature type="binding site" evidence="1">
    <location>
        <position position="802"/>
    </location>
    <ligand>
        <name>Mo-bis(molybdopterin guanine dinucleotide)</name>
        <dbReference type="ChEBI" id="CHEBI:60539"/>
    </ligand>
</feature>
<feature type="binding site" evidence="1">
    <location>
        <position position="819"/>
    </location>
    <ligand>
        <name>Mo-bis(molybdopterin guanine dinucleotide)</name>
        <dbReference type="ChEBI" id="CHEBI:60539"/>
    </ligand>
</feature>
<comment type="function">
    <text evidence="1">Catalytic subunit of the periplasmic nitrate reductase complex NapAB. Receives electrons from NapB and catalyzes the reduction of nitrate to nitrite.</text>
</comment>
<comment type="catalytic activity">
    <reaction evidence="1">
        <text>2 Fe(II)-[cytochrome] + nitrate + 2 H(+) = 2 Fe(III)-[cytochrome] + nitrite + H2O</text>
        <dbReference type="Rhea" id="RHEA:12909"/>
        <dbReference type="Rhea" id="RHEA-COMP:11777"/>
        <dbReference type="Rhea" id="RHEA-COMP:11778"/>
        <dbReference type="ChEBI" id="CHEBI:15377"/>
        <dbReference type="ChEBI" id="CHEBI:15378"/>
        <dbReference type="ChEBI" id="CHEBI:16301"/>
        <dbReference type="ChEBI" id="CHEBI:17632"/>
        <dbReference type="ChEBI" id="CHEBI:29033"/>
        <dbReference type="ChEBI" id="CHEBI:29034"/>
        <dbReference type="EC" id="1.9.6.1"/>
    </reaction>
</comment>
<comment type="cofactor">
    <cofactor evidence="1">
        <name>[4Fe-4S] cluster</name>
        <dbReference type="ChEBI" id="CHEBI:49883"/>
    </cofactor>
    <text evidence="1">Binds 1 [4Fe-4S] cluster.</text>
</comment>
<comment type="cofactor">
    <cofactor evidence="1">
        <name>Mo-bis(molybdopterin guanine dinucleotide)</name>
        <dbReference type="ChEBI" id="CHEBI:60539"/>
    </cofactor>
    <text evidence="1">Binds 1 molybdenum-bis(molybdopterin guanine dinucleotide) (Mo-bis-MGD) cofactor per subunit.</text>
</comment>
<comment type="subunit">
    <text evidence="1">Component of the periplasmic nitrate reductase NapAB complex composed of NapA and NapB.</text>
</comment>
<comment type="subcellular location">
    <subcellularLocation>
        <location evidence="1">Periplasm</location>
    </subcellularLocation>
</comment>
<comment type="PTM">
    <text evidence="1">Predicted to be exported by the Tat system. The position of the signal peptide cleavage has not been experimentally proven.</text>
</comment>
<comment type="similarity">
    <text evidence="1">Belongs to the prokaryotic molybdopterin-containing oxidoreductase family. NasA/NapA/NarB subfamily.</text>
</comment>
<organism>
    <name type="scientific">Shigella boydii serotype 4 (strain Sb227)</name>
    <dbReference type="NCBI Taxonomy" id="300268"/>
    <lineage>
        <taxon>Bacteria</taxon>
        <taxon>Pseudomonadati</taxon>
        <taxon>Pseudomonadota</taxon>
        <taxon>Gammaproteobacteria</taxon>
        <taxon>Enterobacterales</taxon>
        <taxon>Enterobacteriaceae</taxon>
        <taxon>Shigella</taxon>
    </lineage>
</organism>
<keyword id="KW-0004">4Fe-4S</keyword>
<keyword id="KW-0249">Electron transport</keyword>
<keyword id="KW-0408">Iron</keyword>
<keyword id="KW-0411">Iron-sulfur</keyword>
<keyword id="KW-0479">Metal-binding</keyword>
<keyword id="KW-0500">Molybdenum</keyword>
<keyword id="KW-0534">Nitrate assimilation</keyword>
<keyword id="KW-0560">Oxidoreductase</keyword>
<keyword id="KW-0574">Periplasm</keyword>
<keyword id="KW-0732">Signal</keyword>
<keyword id="KW-0813">Transport</keyword>
<protein>
    <recommendedName>
        <fullName evidence="1">Periplasmic nitrate reductase</fullName>
        <ecNumber evidence="1">1.9.6.1</ecNumber>
    </recommendedName>
</protein>
<gene>
    <name evidence="1" type="primary">napA</name>
    <name type="ordered locus">SBO_2101</name>
</gene>
<reference key="1">
    <citation type="journal article" date="2005" name="Nucleic Acids Res.">
        <title>Genome dynamics and diversity of Shigella species, the etiologic agents of bacillary dysentery.</title>
        <authorList>
            <person name="Yang F."/>
            <person name="Yang J."/>
            <person name="Zhang X."/>
            <person name="Chen L."/>
            <person name="Jiang Y."/>
            <person name="Yan Y."/>
            <person name="Tang X."/>
            <person name="Wang J."/>
            <person name="Xiong Z."/>
            <person name="Dong J."/>
            <person name="Xue Y."/>
            <person name="Zhu Y."/>
            <person name="Xu X."/>
            <person name="Sun L."/>
            <person name="Chen S."/>
            <person name="Nie H."/>
            <person name="Peng J."/>
            <person name="Xu J."/>
            <person name="Wang Y."/>
            <person name="Yuan Z."/>
            <person name="Wen Y."/>
            <person name="Yao Z."/>
            <person name="Shen Y."/>
            <person name="Qiang B."/>
            <person name="Hou Y."/>
            <person name="Yu J."/>
            <person name="Jin Q."/>
        </authorList>
    </citation>
    <scope>NUCLEOTIDE SEQUENCE [LARGE SCALE GENOMIC DNA]</scope>
    <source>
        <strain>Sb227</strain>
    </source>
</reference>
<evidence type="ECO:0000255" key="1">
    <source>
        <dbReference type="HAMAP-Rule" id="MF_01630"/>
    </source>
</evidence>